<gene>
    <name evidence="1" type="primary">leuA</name>
    <name type="ordered locus">Spirs_1609</name>
</gene>
<evidence type="ECO:0000255" key="1">
    <source>
        <dbReference type="HAMAP-Rule" id="MF_01025"/>
    </source>
</evidence>
<organism>
    <name type="scientific">Sediminispirochaeta smaragdinae (strain DSM 11293 / JCM 15392 / SEBR 4228)</name>
    <name type="common">Spirochaeta smaragdinae</name>
    <dbReference type="NCBI Taxonomy" id="573413"/>
    <lineage>
        <taxon>Bacteria</taxon>
        <taxon>Pseudomonadati</taxon>
        <taxon>Spirochaetota</taxon>
        <taxon>Spirochaetia</taxon>
        <taxon>Spirochaetales</taxon>
        <taxon>Spirochaetaceae</taxon>
        <taxon>Sediminispirochaeta</taxon>
    </lineage>
</organism>
<feature type="chain" id="PRO_0000406899" description="2-isopropylmalate synthase">
    <location>
        <begin position="1"/>
        <end position="505"/>
    </location>
</feature>
<feature type="domain" description="Pyruvate carboxyltransferase" evidence="1">
    <location>
        <begin position="5"/>
        <end position="269"/>
    </location>
</feature>
<feature type="region of interest" description="Regulatory domain" evidence="1">
    <location>
        <begin position="393"/>
        <end position="505"/>
    </location>
</feature>
<feature type="binding site" evidence="1">
    <location>
        <position position="14"/>
    </location>
    <ligand>
        <name>Mn(2+)</name>
        <dbReference type="ChEBI" id="CHEBI:29035"/>
    </ligand>
</feature>
<feature type="binding site" evidence="1">
    <location>
        <position position="204"/>
    </location>
    <ligand>
        <name>Mn(2+)</name>
        <dbReference type="ChEBI" id="CHEBI:29035"/>
    </ligand>
</feature>
<feature type="binding site" evidence="1">
    <location>
        <position position="206"/>
    </location>
    <ligand>
        <name>Mn(2+)</name>
        <dbReference type="ChEBI" id="CHEBI:29035"/>
    </ligand>
</feature>
<feature type="binding site" evidence="1">
    <location>
        <position position="240"/>
    </location>
    <ligand>
        <name>Mn(2+)</name>
        <dbReference type="ChEBI" id="CHEBI:29035"/>
    </ligand>
</feature>
<proteinExistence type="inferred from homology"/>
<protein>
    <recommendedName>
        <fullName evidence="1">2-isopropylmalate synthase</fullName>
        <ecNumber evidence="1">2.3.3.13</ecNumber>
    </recommendedName>
    <alternativeName>
        <fullName evidence="1">Alpha-IPM synthase</fullName>
    </alternativeName>
    <alternativeName>
        <fullName evidence="1">Alpha-isopropylmalate synthase</fullName>
    </alternativeName>
</protein>
<keyword id="KW-0028">Amino-acid biosynthesis</keyword>
<keyword id="KW-0100">Branched-chain amino acid biosynthesis</keyword>
<keyword id="KW-0963">Cytoplasm</keyword>
<keyword id="KW-0432">Leucine biosynthesis</keyword>
<keyword id="KW-0464">Manganese</keyword>
<keyword id="KW-0479">Metal-binding</keyword>
<keyword id="KW-1185">Reference proteome</keyword>
<keyword id="KW-0808">Transferase</keyword>
<sequence>MPRRIKIFDTTLRDGEQSPGASMSLEQKIKMASALERLGVDRIEAGFPVSSPVQFEAVQRVSATVKKAEVVGLARCVQRDIDAAYDALRDAAHPMLHIFIATSPLHREYKLKKSKEEILDTVRECLNYGGKGFSRMEFSPEDASRTEPDYLVEVVKTAIECGATSINIPDTVGYAVPKEFGQLISFLVEQVPQFSDGSVDLSVHCHNDLGLALANSLAAVRSGASQVEVTLNGIGERAGNCPMEELIMSLDVRKDMFDVETGIHTEYLYPTGKLLQSITGLLIPRNKPIFGDNVFVHESGIHQHGVLNKRETYEIMKPERIGRSSETIIMGRHSGKHALEDKLSQYNIKLTRQQFEDVFARFTAIADKKKEVYDEDLFSIVGTVLGGVVKGFSLLYFHTFTGNSLIPGATVKVRSEAGEKVASATGDGPVDAVFNAIDECVGINARLKEYIIHAIGSGKDAQGEVKLEVEIEGATYGGKASSTDIIEASAMAYLNAVNRFELRKR</sequence>
<comment type="function">
    <text evidence="1">Catalyzes the condensation of the acetyl group of acetyl-CoA with 3-methyl-2-oxobutanoate (2-ketoisovalerate) to form 3-carboxy-3-hydroxy-4-methylpentanoate (2-isopropylmalate).</text>
</comment>
<comment type="catalytic activity">
    <reaction evidence="1">
        <text>3-methyl-2-oxobutanoate + acetyl-CoA + H2O = (2S)-2-isopropylmalate + CoA + H(+)</text>
        <dbReference type="Rhea" id="RHEA:21524"/>
        <dbReference type="ChEBI" id="CHEBI:1178"/>
        <dbReference type="ChEBI" id="CHEBI:11851"/>
        <dbReference type="ChEBI" id="CHEBI:15377"/>
        <dbReference type="ChEBI" id="CHEBI:15378"/>
        <dbReference type="ChEBI" id="CHEBI:57287"/>
        <dbReference type="ChEBI" id="CHEBI:57288"/>
        <dbReference type="EC" id="2.3.3.13"/>
    </reaction>
</comment>
<comment type="cofactor">
    <cofactor evidence="1">
        <name>Mn(2+)</name>
        <dbReference type="ChEBI" id="CHEBI:29035"/>
    </cofactor>
</comment>
<comment type="pathway">
    <text evidence="1">Amino-acid biosynthesis; L-leucine biosynthesis; L-leucine from 3-methyl-2-oxobutanoate: step 1/4.</text>
</comment>
<comment type="subunit">
    <text evidence="1">Homodimer.</text>
</comment>
<comment type="subcellular location">
    <subcellularLocation>
        <location evidence="1">Cytoplasm</location>
    </subcellularLocation>
</comment>
<comment type="similarity">
    <text evidence="1">Belongs to the alpha-IPM synthase/homocitrate synthase family. LeuA type 1 subfamily.</text>
</comment>
<accession>E1R5X1</accession>
<reference key="1">
    <citation type="journal article" date="2010" name="Stand. Genomic Sci.">
        <title>Complete genome sequence of Spirochaeta smaragdinae type strain (SEBR 4228).</title>
        <authorList>
            <person name="Mavromatis K."/>
            <person name="Yasawong M."/>
            <person name="Chertkov O."/>
            <person name="Lapidus A."/>
            <person name="Lucas S."/>
            <person name="Nolan M."/>
            <person name="Del Rio T.G."/>
            <person name="Tice H."/>
            <person name="Cheng J.F."/>
            <person name="Pitluck S."/>
            <person name="Liolios K."/>
            <person name="Ivanova N."/>
            <person name="Tapia R."/>
            <person name="Han C."/>
            <person name="Bruce D."/>
            <person name="Goodwin L."/>
            <person name="Pati A."/>
            <person name="Chen A."/>
            <person name="Palaniappan K."/>
            <person name="Land M."/>
            <person name="Hauser L."/>
            <person name="Chang Y.J."/>
            <person name="Jeffries C.D."/>
            <person name="Detter J.C."/>
            <person name="Rohde M."/>
            <person name="Brambilla E."/>
            <person name="Spring S."/>
            <person name="Goker M."/>
            <person name="Sikorski J."/>
            <person name="Woyke T."/>
            <person name="Bristow J."/>
            <person name="Eisen J.A."/>
            <person name="Markowitz V."/>
            <person name="Hugenholtz P."/>
            <person name="Klenk H.P."/>
            <person name="Kyrpides N.C."/>
        </authorList>
    </citation>
    <scope>NUCLEOTIDE SEQUENCE [LARGE SCALE GENOMIC DNA]</scope>
    <source>
        <strain>DSM 11293 / JCM 15392 / SEBR 4228</strain>
    </source>
</reference>
<dbReference type="EC" id="2.3.3.13" evidence="1"/>
<dbReference type="EMBL" id="CP002116">
    <property type="protein sequence ID" value="ADK80736.1"/>
    <property type="molecule type" value="Genomic_DNA"/>
</dbReference>
<dbReference type="RefSeq" id="WP_013254200.1">
    <property type="nucleotide sequence ID" value="NC_014364.1"/>
</dbReference>
<dbReference type="SMR" id="E1R5X1"/>
<dbReference type="STRING" id="573413.Spirs_1609"/>
<dbReference type="KEGG" id="ssm:Spirs_1609"/>
<dbReference type="eggNOG" id="COG0119">
    <property type="taxonomic scope" value="Bacteria"/>
</dbReference>
<dbReference type="HOGENOM" id="CLU_022158_0_1_12"/>
<dbReference type="OrthoDB" id="9804858at2"/>
<dbReference type="UniPathway" id="UPA00048">
    <property type="reaction ID" value="UER00070"/>
</dbReference>
<dbReference type="Proteomes" id="UP000002318">
    <property type="component" value="Chromosome"/>
</dbReference>
<dbReference type="GO" id="GO:0005737">
    <property type="term" value="C:cytoplasm"/>
    <property type="evidence" value="ECO:0007669"/>
    <property type="project" value="UniProtKB-SubCell"/>
</dbReference>
<dbReference type="GO" id="GO:0003852">
    <property type="term" value="F:2-isopropylmalate synthase activity"/>
    <property type="evidence" value="ECO:0007669"/>
    <property type="project" value="UniProtKB-UniRule"/>
</dbReference>
<dbReference type="GO" id="GO:0003985">
    <property type="term" value="F:acetyl-CoA C-acetyltransferase activity"/>
    <property type="evidence" value="ECO:0007669"/>
    <property type="project" value="UniProtKB-UniRule"/>
</dbReference>
<dbReference type="GO" id="GO:0030145">
    <property type="term" value="F:manganese ion binding"/>
    <property type="evidence" value="ECO:0007669"/>
    <property type="project" value="UniProtKB-UniRule"/>
</dbReference>
<dbReference type="GO" id="GO:0009098">
    <property type="term" value="P:L-leucine biosynthetic process"/>
    <property type="evidence" value="ECO:0007669"/>
    <property type="project" value="UniProtKB-UniRule"/>
</dbReference>
<dbReference type="CDD" id="cd07940">
    <property type="entry name" value="DRE_TIM_IPMS"/>
    <property type="match status" value="1"/>
</dbReference>
<dbReference type="FunFam" id="1.10.238.260:FF:000001">
    <property type="entry name" value="2-isopropylmalate synthase"/>
    <property type="match status" value="1"/>
</dbReference>
<dbReference type="FunFam" id="3.20.20.70:FF:000010">
    <property type="entry name" value="2-isopropylmalate synthase"/>
    <property type="match status" value="1"/>
</dbReference>
<dbReference type="FunFam" id="3.30.160.270:FF:000003">
    <property type="entry name" value="2-isopropylmalate synthase"/>
    <property type="match status" value="1"/>
</dbReference>
<dbReference type="Gene3D" id="1.10.238.260">
    <property type="match status" value="1"/>
</dbReference>
<dbReference type="Gene3D" id="3.30.160.270">
    <property type="match status" value="1"/>
</dbReference>
<dbReference type="Gene3D" id="3.20.20.70">
    <property type="entry name" value="Aldolase class I"/>
    <property type="match status" value="1"/>
</dbReference>
<dbReference type="HAMAP" id="MF_01025">
    <property type="entry name" value="LeuA_type1"/>
    <property type="match status" value="1"/>
</dbReference>
<dbReference type="InterPro" id="IPR050073">
    <property type="entry name" value="2-IPM_HCS-like"/>
</dbReference>
<dbReference type="InterPro" id="IPR013709">
    <property type="entry name" value="2-isopropylmalate_synth_dimer"/>
</dbReference>
<dbReference type="InterPro" id="IPR002034">
    <property type="entry name" value="AIPM/Hcit_synth_CS"/>
</dbReference>
<dbReference type="InterPro" id="IPR013785">
    <property type="entry name" value="Aldolase_TIM"/>
</dbReference>
<dbReference type="InterPro" id="IPR054691">
    <property type="entry name" value="LeuA/HCS_post-cat"/>
</dbReference>
<dbReference type="InterPro" id="IPR036230">
    <property type="entry name" value="LeuA_allosteric_dom_sf"/>
</dbReference>
<dbReference type="InterPro" id="IPR005671">
    <property type="entry name" value="LeuA_bact_synth"/>
</dbReference>
<dbReference type="InterPro" id="IPR000891">
    <property type="entry name" value="PYR_CT"/>
</dbReference>
<dbReference type="NCBIfam" id="TIGR00973">
    <property type="entry name" value="leuA_bact"/>
    <property type="match status" value="1"/>
</dbReference>
<dbReference type="NCBIfam" id="NF002085">
    <property type="entry name" value="PRK00915.1-2"/>
    <property type="match status" value="1"/>
</dbReference>
<dbReference type="NCBIfam" id="NF002086">
    <property type="entry name" value="PRK00915.1-3"/>
    <property type="match status" value="1"/>
</dbReference>
<dbReference type="PANTHER" id="PTHR10277:SF9">
    <property type="entry name" value="2-ISOPROPYLMALATE SYNTHASE 1, CHLOROPLASTIC-RELATED"/>
    <property type="match status" value="1"/>
</dbReference>
<dbReference type="PANTHER" id="PTHR10277">
    <property type="entry name" value="HOMOCITRATE SYNTHASE-RELATED"/>
    <property type="match status" value="1"/>
</dbReference>
<dbReference type="Pfam" id="PF22617">
    <property type="entry name" value="HCS_D2"/>
    <property type="match status" value="1"/>
</dbReference>
<dbReference type="Pfam" id="PF00682">
    <property type="entry name" value="HMGL-like"/>
    <property type="match status" value="1"/>
</dbReference>
<dbReference type="Pfam" id="PF08502">
    <property type="entry name" value="LeuA_dimer"/>
    <property type="match status" value="1"/>
</dbReference>
<dbReference type="SMART" id="SM00917">
    <property type="entry name" value="LeuA_dimer"/>
    <property type="match status" value="1"/>
</dbReference>
<dbReference type="SUPFAM" id="SSF110921">
    <property type="entry name" value="2-isopropylmalate synthase LeuA, allosteric (dimerisation) domain"/>
    <property type="match status" value="1"/>
</dbReference>
<dbReference type="SUPFAM" id="SSF51569">
    <property type="entry name" value="Aldolase"/>
    <property type="match status" value="1"/>
</dbReference>
<dbReference type="PROSITE" id="PS00815">
    <property type="entry name" value="AIPM_HOMOCIT_SYNTH_1"/>
    <property type="match status" value="1"/>
</dbReference>
<dbReference type="PROSITE" id="PS00816">
    <property type="entry name" value="AIPM_HOMOCIT_SYNTH_2"/>
    <property type="match status" value="1"/>
</dbReference>
<dbReference type="PROSITE" id="PS50991">
    <property type="entry name" value="PYR_CT"/>
    <property type="match status" value="1"/>
</dbReference>
<name>LEU1_SEDSS</name>